<feature type="chain" id="PRO_0000314382" description="Carboxy-S-adenosyl-L-methionine synthase">
    <location>
        <begin position="1"/>
        <end position="243"/>
    </location>
</feature>
<feature type="binding site" evidence="1">
    <location>
        <position position="40"/>
    </location>
    <ligand>
        <name>S-adenosyl-L-methionine</name>
        <dbReference type="ChEBI" id="CHEBI:59789"/>
    </ligand>
</feature>
<feature type="binding site" evidence="1">
    <location>
        <begin position="65"/>
        <end position="67"/>
    </location>
    <ligand>
        <name>S-adenosyl-L-methionine</name>
        <dbReference type="ChEBI" id="CHEBI:59789"/>
    </ligand>
</feature>
<feature type="binding site" evidence="1">
    <location>
        <begin position="90"/>
        <end position="91"/>
    </location>
    <ligand>
        <name>S-adenosyl-L-methionine</name>
        <dbReference type="ChEBI" id="CHEBI:59789"/>
    </ligand>
</feature>
<feature type="binding site" evidence="1">
    <location>
        <begin position="118"/>
        <end position="119"/>
    </location>
    <ligand>
        <name>S-adenosyl-L-methionine</name>
        <dbReference type="ChEBI" id="CHEBI:59789"/>
    </ligand>
</feature>
<feature type="binding site" evidence="1">
    <location>
        <position position="133"/>
    </location>
    <ligand>
        <name>S-adenosyl-L-methionine</name>
        <dbReference type="ChEBI" id="CHEBI:59789"/>
    </ligand>
</feature>
<feature type="binding site" evidence="1">
    <location>
        <position position="200"/>
    </location>
    <ligand>
        <name>S-adenosyl-L-methionine</name>
        <dbReference type="ChEBI" id="CHEBI:59789"/>
    </ligand>
</feature>
<proteinExistence type="inferred from homology"/>
<protein>
    <recommendedName>
        <fullName evidence="1">Carboxy-S-adenosyl-L-methionine synthase</fullName>
        <shortName evidence="1">Cx-SAM synthase</shortName>
        <ecNumber evidence="1">2.1.3.-</ecNumber>
    </recommendedName>
</protein>
<name>CMOA_SHEPC</name>
<accession>A4Y6S3</accession>
<organism>
    <name type="scientific">Shewanella putrefaciens (strain CN-32 / ATCC BAA-453)</name>
    <dbReference type="NCBI Taxonomy" id="319224"/>
    <lineage>
        <taxon>Bacteria</taxon>
        <taxon>Pseudomonadati</taxon>
        <taxon>Pseudomonadota</taxon>
        <taxon>Gammaproteobacteria</taxon>
        <taxon>Alteromonadales</taxon>
        <taxon>Shewanellaceae</taxon>
        <taxon>Shewanella</taxon>
    </lineage>
</organism>
<sequence length="243" mass="27511">MNTSQDTIYAQPNEHISDFQFDNRVAGVFSDMIRRSVPGYTQIINTIGDFADRFVMPNTQIYDLGCSLGAATLSIRRQIQGRQCRIIAVDNSESMVARCQENLNAYVSDTDVDLVCGDIRDIDIQNASLVVLNFTLQFLPPEDRETLIAKIYQGLNPGGILVLSEKIRFEDAPIQTLLEEQHLDFKRANGYSELEISQKRSALENVMKPDTLTTHQQRLTSQGFSHFSLWFQCFNFASMVAIK</sequence>
<reference key="1">
    <citation type="submission" date="2007-04" db="EMBL/GenBank/DDBJ databases">
        <title>Complete sequence of Shewanella putrefaciens CN-32.</title>
        <authorList>
            <consortium name="US DOE Joint Genome Institute"/>
            <person name="Copeland A."/>
            <person name="Lucas S."/>
            <person name="Lapidus A."/>
            <person name="Barry K."/>
            <person name="Detter J.C."/>
            <person name="Glavina del Rio T."/>
            <person name="Hammon N."/>
            <person name="Israni S."/>
            <person name="Dalin E."/>
            <person name="Tice H."/>
            <person name="Pitluck S."/>
            <person name="Chain P."/>
            <person name="Malfatti S."/>
            <person name="Shin M."/>
            <person name="Vergez L."/>
            <person name="Schmutz J."/>
            <person name="Larimer F."/>
            <person name="Land M."/>
            <person name="Hauser L."/>
            <person name="Kyrpides N."/>
            <person name="Mikhailova N."/>
            <person name="Romine M.F."/>
            <person name="Fredrickson J."/>
            <person name="Tiedje J."/>
            <person name="Richardson P."/>
        </authorList>
    </citation>
    <scope>NUCLEOTIDE SEQUENCE [LARGE SCALE GENOMIC DNA]</scope>
    <source>
        <strain>CN-32 / ATCC BAA-453</strain>
    </source>
</reference>
<evidence type="ECO:0000255" key="1">
    <source>
        <dbReference type="HAMAP-Rule" id="MF_01589"/>
    </source>
</evidence>
<dbReference type="EC" id="2.1.3.-" evidence="1"/>
<dbReference type="EMBL" id="CP000681">
    <property type="protein sequence ID" value="ABP75656.1"/>
    <property type="molecule type" value="Genomic_DNA"/>
</dbReference>
<dbReference type="SMR" id="A4Y6S3"/>
<dbReference type="STRING" id="319224.Sputcn32_1933"/>
<dbReference type="KEGG" id="spc:Sputcn32_1933"/>
<dbReference type="eggNOG" id="COG2226">
    <property type="taxonomic scope" value="Bacteria"/>
</dbReference>
<dbReference type="HOGENOM" id="CLU_078475_0_0_6"/>
<dbReference type="GO" id="GO:0016743">
    <property type="term" value="F:carboxyl- or carbamoyltransferase activity"/>
    <property type="evidence" value="ECO:0007669"/>
    <property type="project" value="UniProtKB-UniRule"/>
</dbReference>
<dbReference type="GO" id="GO:1904047">
    <property type="term" value="F:S-adenosyl-L-methionine binding"/>
    <property type="evidence" value="ECO:0007669"/>
    <property type="project" value="UniProtKB-UniRule"/>
</dbReference>
<dbReference type="GO" id="GO:0002098">
    <property type="term" value="P:tRNA wobble uridine modification"/>
    <property type="evidence" value="ECO:0007669"/>
    <property type="project" value="InterPro"/>
</dbReference>
<dbReference type="CDD" id="cd02440">
    <property type="entry name" value="AdoMet_MTases"/>
    <property type="match status" value="1"/>
</dbReference>
<dbReference type="Gene3D" id="3.40.50.150">
    <property type="entry name" value="Vaccinia Virus protein VP39"/>
    <property type="match status" value="1"/>
</dbReference>
<dbReference type="HAMAP" id="MF_01589">
    <property type="entry name" value="Cx_SAM_synthase"/>
    <property type="match status" value="1"/>
</dbReference>
<dbReference type="InterPro" id="IPR005271">
    <property type="entry name" value="CmoA"/>
</dbReference>
<dbReference type="InterPro" id="IPR041698">
    <property type="entry name" value="Methyltransf_25"/>
</dbReference>
<dbReference type="InterPro" id="IPR029063">
    <property type="entry name" value="SAM-dependent_MTases_sf"/>
</dbReference>
<dbReference type="NCBIfam" id="TIGR00740">
    <property type="entry name" value="carboxy-S-adenosyl-L-methionine synthase CmoA"/>
    <property type="match status" value="1"/>
</dbReference>
<dbReference type="NCBIfam" id="NF011995">
    <property type="entry name" value="PRK15451.1"/>
    <property type="match status" value="1"/>
</dbReference>
<dbReference type="PANTHER" id="PTHR43861:SF2">
    <property type="entry name" value="CARBOXY-S-ADENOSYL-L-METHIONINE SYNTHASE"/>
    <property type="match status" value="1"/>
</dbReference>
<dbReference type="PANTHER" id="PTHR43861">
    <property type="entry name" value="TRANS-ACONITATE 2-METHYLTRANSFERASE-RELATED"/>
    <property type="match status" value="1"/>
</dbReference>
<dbReference type="Pfam" id="PF13649">
    <property type="entry name" value="Methyltransf_25"/>
    <property type="match status" value="1"/>
</dbReference>
<dbReference type="PIRSF" id="PIRSF006325">
    <property type="entry name" value="MeTrfase_bac"/>
    <property type="match status" value="1"/>
</dbReference>
<dbReference type="SUPFAM" id="SSF53335">
    <property type="entry name" value="S-adenosyl-L-methionine-dependent methyltransferases"/>
    <property type="match status" value="1"/>
</dbReference>
<comment type="function">
    <text evidence="1">Catalyzes the conversion of S-adenosyl-L-methionine (SAM) to carboxy-S-adenosyl-L-methionine (Cx-SAM).</text>
</comment>
<comment type="catalytic activity">
    <reaction evidence="1">
        <text>prephenate + S-adenosyl-L-methionine = carboxy-S-adenosyl-L-methionine + 3-phenylpyruvate + H2O</text>
        <dbReference type="Rhea" id="RHEA:51692"/>
        <dbReference type="ChEBI" id="CHEBI:15377"/>
        <dbReference type="ChEBI" id="CHEBI:18005"/>
        <dbReference type="ChEBI" id="CHEBI:29934"/>
        <dbReference type="ChEBI" id="CHEBI:59789"/>
        <dbReference type="ChEBI" id="CHEBI:134278"/>
    </reaction>
</comment>
<comment type="subunit">
    <text evidence="1">Homodimer.</text>
</comment>
<comment type="similarity">
    <text evidence="1">Belongs to the class I-like SAM-binding methyltransferase superfamily. Cx-SAM synthase family.</text>
</comment>
<gene>
    <name evidence="1" type="primary">cmoA</name>
    <name type="ordered locus">Sputcn32_1933</name>
</gene>
<keyword id="KW-0949">S-adenosyl-L-methionine</keyword>
<keyword id="KW-0808">Transferase</keyword>